<name>RS16_PSEPF</name>
<reference key="1">
    <citation type="journal article" date="2009" name="Genome Biol.">
        <title>Genomic and genetic analyses of diversity and plant interactions of Pseudomonas fluorescens.</title>
        <authorList>
            <person name="Silby M.W."/>
            <person name="Cerdeno-Tarraga A.M."/>
            <person name="Vernikos G.S."/>
            <person name="Giddens S.R."/>
            <person name="Jackson R.W."/>
            <person name="Preston G.M."/>
            <person name="Zhang X.-X."/>
            <person name="Moon C.D."/>
            <person name="Gehrig S.M."/>
            <person name="Godfrey S.A.C."/>
            <person name="Knight C.G."/>
            <person name="Malone J.G."/>
            <person name="Robinson Z."/>
            <person name="Spiers A.J."/>
            <person name="Harris S."/>
            <person name="Challis G.L."/>
            <person name="Yaxley A.M."/>
            <person name="Harris D."/>
            <person name="Seeger K."/>
            <person name="Murphy L."/>
            <person name="Rutter S."/>
            <person name="Squares R."/>
            <person name="Quail M.A."/>
            <person name="Saunders E."/>
            <person name="Mavromatis K."/>
            <person name="Brettin T.S."/>
            <person name="Bentley S.D."/>
            <person name="Hothersall J."/>
            <person name="Stephens E."/>
            <person name="Thomas C.M."/>
            <person name="Parkhill J."/>
            <person name="Levy S.B."/>
            <person name="Rainey P.B."/>
            <person name="Thomson N.R."/>
        </authorList>
    </citation>
    <scope>NUCLEOTIDE SEQUENCE [LARGE SCALE GENOMIC DNA]</scope>
    <source>
        <strain>Pf0-1</strain>
    </source>
</reference>
<feature type="chain" id="PRO_0000243850" description="Small ribosomal subunit protein bS16">
    <location>
        <begin position="1"/>
        <end position="83"/>
    </location>
</feature>
<keyword id="KW-0687">Ribonucleoprotein</keyword>
<keyword id="KW-0689">Ribosomal protein</keyword>
<dbReference type="EMBL" id="CP000094">
    <property type="protein sequence ID" value="ABA72762.1"/>
    <property type="molecule type" value="Genomic_DNA"/>
</dbReference>
<dbReference type="RefSeq" id="WP_003185073.1">
    <property type="nucleotide sequence ID" value="NC_007492.2"/>
</dbReference>
<dbReference type="SMR" id="Q3KHJ4"/>
<dbReference type="GeneID" id="93487741"/>
<dbReference type="KEGG" id="pfo:Pfl01_1019"/>
<dbReference type="eggNOG" id="COG0228">
    <property type="taxonomic scope" value="Bacteria"/>
</dbReference>
<dbReference type="HOGENOM" id="CLU_100590_5_1_6"/>
<dbReference type="Proteomes" id="UP000002704">
    <property type="component" value="Chromosome"/>
</dbReference>
<dbReference type="GO" id="GO:0005737">
    <property type="term" value="C:cytoplasm"/>
    <property type="evidence" value="ECO:0007669"/>
    <property type="project" value="UniProtKB-ARBA"/>
</dbReference>
<dbReference type="GO" id="GO:0015935">
    <property type="term" value="C:small ribosomal subunit"/>
    <property type="evidence" value="ECO:0007669"/>
    <property type="project" value="TreeGrafter"/>
</dbReference>
<dbReference type="GO" id="GO:0003735">
    <property type="term" value="F:structural constituent of ribosome"/>
    <property type="evidence" value="ECO:0007669"/>
    <property type="project" value="InterPro"/>
</dbReference>
<dbReference type="GO" id="GO:0006412">
    <property type="term" value="P:translation"/>
    <property type="evidence" value="ECO:0007669"/>
    <property type="project" value="UniProtKB-UniRule"/>
</dbReference>
<dbReference type="Gene3D" id="3.30.1320.10">
    <property type="match status" value="1"/>
</dbReference>
<dbReference type="HAMAP" id="MF_00385">
    <property type="entry name" value="Ribosomal_bS16"/>
    <property type="match status" value="1"/>
</dbReference>
<dbReference type="InterPro" id="IPR000307">
    <property type="entry name" value="Ribosomal_bS16"/>
</dbReference>
<dbReference type="InterPro" id="IPR023803">
    <property type="entry name" value="Ribosomal_bS16_dom_sf"/>
</dbReference>
<dbReference type="NCBIfam" id="TIGR00002">
    <property type="entry name" value="S16"/>
    <property type="match status" value="1"/>
</dbReference>
<dbReference type="PANTHER" id="PTHR12919">
    <property type="entry name" value="30S RIBOSOMAL PROTEIN S16"/>
    <property type="match status" value="1"/>
</dbReference>
<dbReference type="PANTHER" id="PTHR12919:SF20">
    <property type="entry name" value="SMALL RIBOSOMAL SUBUNIT PROTEIN BS16M"/>
    <property type="match status" value="1"/>
</dbReference>
<dbReference type="Pfam" id="PF00886">
    <property type="entry name" value="Ribosomal_S16"/>
    <property type="match status" value="1"/>
</dbReference>
<dbReference type="SUPFAM" id="SSF54565">
    <property type="entry name" value="Ribosomal protein S16"/>
    <property type="match status" value="1"/>
</dbReference>
<sequence>MLTIRLALGGSKKRPFYHLTVTDSRNPRDGSHKEQVGFFNPVARGQEIRLSVNQERVAYWLSVGAQPSERVAQLLKESAKAAA</sequence>
<protein>
    <recommendedName>
        <fullName evidence="1">Small ribosomal subunit protein bS16</fullName>
    </recommendedName>
    <alternativeName>
        <fullName evidence="2">30S ribosomal protein S16</fullName>
    </alternativeName>
</protein>
<proteinExistence type="inferred from homology"/>
<gene>
    <name evidence="1" type="primary">rpsP</name>
    <name type="ordered locus">Pfl01_1019</name>
</gene>
<evidence type="ECO:0000255" key="1">
    <source>
        <dbReference type="HAMAP-Rule" id="MF_00385"/>
    </source>
</evidence>
<evidence type="ECO:0000305" key="2"/>
<accession>Q3KHJ4</accession>
<comment type="similarity">
    <text evidence="1">Belongs to the bacterial ribosomal protein bS16 family.</text>
</comment>
<organism>
    <name type="scientific">Pseudomonas fluorescens (strain Pf0-1)</name>
    <dbReference type="NCBI Taxonomy" id="205922"/>
    <lineage>
        <taxon>Bacteria</taxon>
        <taxon>Pseudomonadati</taxon>
        <taxon>Pseudomonadota</taxon>
        <taxon>Gammaproteobacteria</taxon>
        <taxon>Pseudomonadales</taxon>
        <taxon>Pseudomonadaceae</taxon>
        <taxon>Pseudomonas</taxon>
    </lineage>
</organism>